<reference key="1">
    <citation type="journal article" date="2001" name="Proc. Natl. Acad. Sci. U.S.A.">
        <title>Complete genome sequence of Caulobacter crescentus.</title>
        <authorList>
            <person name="Nierman W.C."/>
            <person name="Feldblyum T.V."/>
            <person name="Laub M.T."/>
            <person name="Paulsen I.T."/>
            <person name="Nelson K.E."/>
            <person name="Eisen J.A."/>
            <person name="Heidelberg J.F."/>
            <person name="Alley M.R.K."/>
            <person name="Ohta N."/>
            <person name="Maddock J.R."/>
            <person name="Potocka I."/>
            <person name="Nelson W.C."/>
            <person name="Newton A."/>
            <person name="Stephens C."/>
            <person name="Phadke N.D."/>
            <person name="Ely B."/>
            <person name="DeBoy R.T."/>
            <person name="Dodson R.J."/>
            <person name="Durkin A.S."/>
            <person name="Gwinn M.L."/>
            <person name="Haft D.H."/>
            <person name="Kolonay J.F."/>
            <person name="Smit J."/>
            <person name="Craven M.B."/>
            <person name="Khouri H.M."/>
            <person name="Shetty J."/>
            <person name="Berry K.J."/>
            <person name="Utterback T.R."/>
            <person name="Tran K."/>
            <person name="Wolf A.M."/>
            <person name="Vamathevan J.J."/>
            <person name="Ermolaeva M.D."/>
            <person name="White O."/>
            <person name="Salzberg S.L."/>
            <person name="Venter J.C."/>
            <person name="Shapiro L."/>
            <person name="Fraser C.M."/>
        </authorList>
    </citation>
    <scope>NUCLEOTIDE SEQUENCE [LARGE SCALE GENOMIC DNA]</scope>
    <source>
        <strain>ATCC 19089 / CIP 103742 / CB 15</strain>
    </source>
</reference>
<comment type="function">
    <text evidence="1">Part of a stress-induced multi-chaperone system, it is involved in the recovery of the cell from heat-induced damage, in cooperation with DnaK, DnaJ and GrpE. Acts before DnaK, in the processing of protein aggregates. Protein binding stimulates the ATPase activity; ATP hydrolysis unfolds the denatured protein aggregates, which probably helps expose new hydrophobic binding sites on the surface of ClpB-bound aggregates, contributing to the solubilization and refolding of denatured protein aggregates by DnaK (By similarity).</text>
</comment>
<comment type="subunit">
    <text evidence="1">Homohexamer. The oligomerization is ATP-dependent (By similarity).</text>
</comment>
<comment type="subcellular location">
    <subcellularLocation>
        <location evidence="3">Cytoplasm</location>
    </subcellularLocation>
</comment>
<comment type="domain">
    <text evidence="1">The Clp repeat (R) domain probably functions as a substrate-discriminating domain, recruiting aggregated proteins to the ClpB hexamer and/or stabilizing bound proteins. The NBD2 domain is responsible for oligomerization, whereas the NBD1 domain stabilizes the hexamer probably in an ATP-dependent manner. The movement of the coiled-coil domain is essential for ClpB ability to rescue proteins from an aggregated state, probably by pulling apart large aggregated proteins, which are bound between the coiled-coils motifs of adjacent ClpB subunits in the functional hexamer (By similarity).</text>
</comment>
<comment type="similarity">
    <text evidence="3">Belongs to the ClpA/ClpB family.</text>
</comment>
<proteinExistence type="inferred from homology"/>
<organism>
    <name type="scientific">Caulobacter vibrioides (strain ATCC 19089 / CIP 103742 / CB 15)</name>
    <name type="common">Caulobacter crescentus</name>
    <dbReference type="NCBI Taxonomy" id="190650"/>
    <lineage>
        <taxon>Bacteria</taxon>
        <taxon>Pseudomonadati</taxon>
        <taxon>Pseudomonadota</taxon>
        <taxon>Alphaproteobacteria</taxon>
        <taxon>Caulobacterales</taxon>
        <taxon>Caulobacteraceae</taxon>
        <taxon>Caulobacter</taxon>
    </lineage>
</organism>
<evidence type="ECO:0000250" key="1"/>
<evidence type="ECO:0000255" key="2">
    <source>
        <dbReference type="PROSITE-ProRule" id="PRU01251"/>
    </source>
</evidence>
<evidence type="ECO:0000305" key="3"/>
<sequence length="859" mass="94060">MNIDLYSDRAKQAVQSAQSLALARGHQQFAPEHILKVLLEEKDGLSRALIQSAGGRPDQLDGGVETLLAKTPRVDGAGGQLYMKPDTARVFAEAEKSAKAAGDAFVTTERLLIAIAKEGGEAAKLFKEAGVSAQSLETAANAMRKGRTADSANAEEGYEALKRYARDLTAAARDGKLDPVIGRDEEIRRTIQVLSRRTKNNPVLIGEPGVGKTAIVEGLALRIVNGDVPESLKDKKLLSLDMGSLIAGAKYRGEFEERLKAVLGEVTAAEGSIILFIDEMHTLVGAGKGDGAMDASNLLKPALARGELHCVGATTLDEYRKHVEKDAALARRFQPVFVSEPTVEDTVSILRGLKEKYEVHHGVRISDSAIVAAATLSNRYIADRFLPDKAIDLVDEASSRVRMQIDSKPEELDEIDRRLVQLKIEREALSKETDAASKQRLENLEVEIDDLQFRSDEMTARWKAEKEKVGGAAQAREALDRLRADLANAQRAGDFARAGQIQYGEIPALERRLAEAEAGDTQALTPEVVDAEQIAAVVSRWTGVPVEKMLEGEREKLLKMEDELRGRVVGQDEALEAVSDAVRRARAGLQDPSKPIGSFLFLGPTGVGKTELTKSLAEFLFADEAAITRMDMSEYMEKHSVSRLIGAPPGYVGYDEGGALTEAIRRRPYQVVLFDEIEKAHPDVFNVLLQVLDDGRLTDGQGRTVDFRNTLIIMTSNLGAEYLASQEDGEDVEAVRPMVMNTVRGHFRPEFLNRIDEIILFKRLSRHNMGDIVRIQLQRVEKLLADRRMALALDAEALNWLADKGYDPVYGARPLKRVIQKELVDPIAKKLLAGEIEDGGVIAVGVTDGQLSFGKAVLQ</sequence>
<gene>
    <name type="primary">clpB</name>
    <name type="ordered locus">CC_0878</name>
</gene>
<keyword id="KW-0067">ATP-binding</keyword>
<keyword id="KW-0143">Chaperone</keyword>
<keyword id="KW-0175">Coiled coil</keyword>
<keyword id="KW-0963">Cytoplasm</keyword>
<keyword id="KW-0547">Nucleotide-binding</keyword>
<keyword id="KW-1185">Reference proteome</keyword>
<keyword id="KW-0677">Repeat</keyword>
<keyword id="KW-0346">Stress response</keyword>
<protein>
    <recommendedName>
        <fullName>Chaperone protein ClpB</fullName>
    </recommendedName>
</protein>
<accession>Q9A9T4</accession>
<feature type="chain" id="PRO_0000191103" description="Chaperone protein ClpB">
    <location>
        <begin position="1"/>
        <end position="859"/>
    </location>
</feature>
<feature type="domain" description="Clp R" evidence="2">
    <location>
        <begin position="3"/>
        <end position="146"/>
    </location>
</feature>
<feature type="region of interest" description="Repeat 1" evidence="2">
    <location>
        <begin position="6"/>
        <end position="71"/>
    </location>
</feature>
<feature type="region of interest" description="Repeat 2" evidence="2">
    <location>
        <begin position="83"/>
        <end position="146"/>
    </location>
</feature>
<feature type="region of interest" description="NBD1" evidence="1">
    <location>
        <begin position="159"/>
        <end position="340"/>
    </location>
</feature>
<feature type="region of interest" description="Linker" evidence="1">
    <location>
        <begin position="341"/>
        <end position="543"/>
    </location>
</feature>
<feature type="region of interest" description="NBD2" evidence="1">
    <location>
        <begin position="553"/>
        <end position="763"/>
    </location>
</feature>
<feature type="region of interest" description="C-terminal" evidence="1">
    <location>
        <begin position="764"/>
        <end position="859"/>
    </location>
</feature>
<feature type="coiled-coil region" evidence="1">
    <location>
        <begin position="391"/>
        <end position="522"/>
    </location>
</feature>
<feature type="binding site" evidence="1">
    <location>
        <begin position="206"/>
        <end position="213"/>
    </location>
    <ligand>
        <name>ATP</name>
        <dbReference type="ChEBI" id="CHEBI:30616"/>
        <label>1</label>
    </ligand>
</feature>
<feature type="binding site" evidence="1">
    <location>
        <begin position="603"/>
        <end position="610"/>
    </location>
    <ligand>
        <name>ATP</name>
        <dbReference type="ChEBI" id="CHEBI:30616"/>
        <label>2</label>
    </ligand>
</feature>
<name>CLPB_CAUVC</name>
<dbReference type="EMBL" id="AE005673">
    <property type="protein sequence ID" value="AAK22863.1"/>
    <property type="molecule type" value="Genomic_DNA"/>
</dbReference>
<dbReference type="PIR" id="C87358">
    <property type="entry name" value="C87358"/>
</dbReference>
<dbReference type="RefSeq" id="NP_419695.1">
    <property type="nucleotide sequence ID" value="NC_002696.2"/>
</dbReference>
<dbReference type="RefSeq" id="WP_010918763.1">
    <property type="nucleotide sequence ID" value="NC_002696.2"/>
</dbReference>
<dbReference type="SMR" id="Q9A9T4"/>
<dbReference type="STRING" id="190650.CC_0878"/>
<dbReference type="EnsemblBacteria" id="AAK22863">
    <property type="protein sequence ID" value="AAK22863"/>
    <property type="gene ID" value="CC_0878"/>
</dbReference>
<dbReference type="KEGG" id="ccr:CC_0878"/>
<dbReference type="PATRIC" id="fig|190650.5.peg.891"/>
<dbReference type="eggNOG" id="COG0542">
    <property type="taxonomic scope" value="Bacteria"/>
</dbReference>
<dbReference type="HOGENOM" id="CLU_005070_4_1_5"/>
<dbReference type="BioCyc" id="CAULO:CC0878-MONOMER"/>
<dbReference type="Proteomes" id="UP000001816">
    <property type="component" value="Chromosome"/>
</dbReference>
<dbReference type="GO" id="GO:0005737">
    <property type="term" value="C:cytoplasm"/>
    <property type="evidence" value="ECO:0007669"/>
    <property type="project" value="UniProtKB-SubCell"/>
</dbReference>
<dbReference type="GO" id="GO:0005524">
    <property type="term" value="F:ATP binding"/>
    <property type="evidence" value="ECO:0007669"/>
    <property type="project" value="UniProtKB-KW"/>
</dbReference>
<dbReference type="GO" id="GO:0016887">
    <property type="term" value="F:ATP hydrolysis activity"/>
    <property type="evidence" value="ECO:0007669"/>
    <property type="project" value="InterPro"/>
</dbReference>
<dbReference type="GO" id="GO:0034605">
    <property type="term" value="P:cellular response to heat"/>
    <property type="evidence" value="ECO:0007669"/>
    <property type="project" value="TreeGrafter"/>
</dbReference>
<dbReference type="GO" id="GO:0042026">
    <property type="term" value="P:protein refolding"/>
    <property type="evidence" value="ECO:0007669"/>
    <property type="project" value="InterPro"/>
</dbReference>
<dbReference type="CDD" id="cd00009">
    <property type="entry name" value="AAA"/>
    <property type="match status" value="1"/>
</dbReference>
<dbReference type="CDD" id="cd19499">
    <property type="entry name" value="RecA-like_ClpB_Hsp104-like"/>
    <property type="match status" value="1"/>
</dbReference>
<dbReference type="FunFam" id="1.10.8.60:FF:000017">
    <property type="entry name" value="ATP-dependent chaperone ClpB"/>
    <property type="match status" value="1"/>
</dbReference>
<dbReference type="FunFam" id="3.40.50.300:FF:000120">
    <property type="entry name" value="ATP-dependent chaperone ClpB"/>
    <property type="match status" value="1"/>
</dbReference>
<dbReference type="FunFam" id="3.40.50.300:FF:000025">
    <property type="entry name" value="ATP-dependent Clp protease subunit"/>
    <property type="match status" value="1"/>
</dbReference>
<dbReference type="FunFam" id="3.40.50.300:FF:000010">
    <property type="entry name" value="Chaperone clpB 1, putative"/>
    <property type="match status" value="1"/>
</dbReference>
<dbReference type="Gene3D" id="1.10.8.60">
    <property type="match status" value="1"/>
</dbReference>
<dbReference type="Gene3D" id="1.10.1780.10">
    <property type="entry name" value="Clp, N-terminal domain"/>
    <property type="match status" value="1"/>
</dbReference>
<dbReference type="Gene3D" id="3.40.50.300">
    <property type="entry name" value="P-loop containing nucleotide triphosphate hydrolases"/>
    <property type="match status" value="3"/>
</dbReference>
<dbReference type="InterPro" id="IPR003593">
    <property type="entry name" value="AAA+_ATPase"/>
</dbReference>
<dbReference type="InterPro" id="IPR003959">
    <property type="entry name" value="ATPase_AAA_core"/>
</dbReference>
<dbReference type="InterPro" id="IPR017730">
    <property type="entry name" value="Chaperonin_ClpB"/>
</dbReference>
<dbReference type="InterPro" id="IPR019489">
    <property type="entry name" value="Clp_ATPase_C"/>
</dbReference>
<dbReference type="InterPro" id="IPR036628">
    <property type="entry name" value="Clp_N_dom_sf"/>
</dbReference>
<dbReference type="InterPro" id="IPR004176">
    <property type="entry name" value="Clp_R_dom"/>
</dbReference>
<dbReference type="InterPro" id="IPR001270">
    <property type="entry name" value="ClpA/B"/>
</dbReference>
<dbReference type="InterPro" id="IPR018368">
    <property type="entry name" value="ClpA/B_CS1"/>
</dbReference>
<dbReference type="InterPro" id="IPR028299">
    <property type="entry name" value="ClpA/B_CS2"/>
</dbReference>
<dbReference type="InterPro" id="IPR041546">
    <property type="entry name" value="ClpA/ClpB_AAA_lid"/>
</dbReference>
<dbReference type="InterPro" id="IPR050130">
    <property type="entry name" value="ClpA_ClpB"/>
</dbReference>
<dbReference type="InterPro" id="IPR027417">
    <property type="entry name" value="P-loop_NTPase"/>
</dbReference>
<dbReference type="NCBIfam" id="TIGR03346">
    <property type="entry name" value="chaperone_ClpB"/>
    <property type="match status" value="1"/>
</dbReference>
<dbReference type="PANTHER" id="PTHR11638">
    <property type="entry name" value="ATP-DEPENDENT CLP PROTEASE"/>
    <property type="match status" value="1"/>
</dbReference>
<dbReference type="PANTHER" id="PTHR11638:SF18">
    <property type="entry name" value="HEAT SHOCK PROTEIN 104"/>
    <property type="match status" value="1"/>
</dbReference>
<dbReference type="Pfam" id="PF00004">
    <property type="entry name" value="AAA"/>
    <property type="match status" value="1"/>
</dbReference>
<dbReference type="Pfam" id="PF07724">
    <property type="entry name" value="AAA_2"/>
    <property type="match status" value="1"/>
</dbReference>
<dbReference type="Pfam" id="PF17871">
    <property type="entry name" value="AAA_lid_9"/>
    <property type="match status" value="1"/>
</dbReference>
<dbReference type="Pfam" id="PF02861">
    <property type="entry name" value="Clp_N"/>
    <property type="match status" value="2"/>
</dbReference>
<dbReference type="Pfam" id="PF10431">
    <property type="entry name" value="ClpB_D2-small"/>
    <property type="match status" value="1"/>
</dbReference>
<dbReference type="PRINTS" id="PR00300">
    <property type="entry name" value="CLPPROTEASEA"/>
</dbReference>
<dbReference type="SMART" id="SM00382">
    <property type="entry name" value="AAA"/>
    <property type="match status" value="2"/>
</dbReference>
<dbReference type="SMART" id="SM01086">
    <property type="entry name" value="ClpB_D2-small"/>
    <property type="match status" value="1"/>
</dbReference>
<dbReference type="SUPFAM" id="SSF81923">
    <property type="entry name" value="Double Clp-N motif"/>
    <property type="match status" value="1"/>
</dbReference>
<dbReference type="SUPFAM" id="SSF52540">
    <property type="entry name" value="P-loop containing nucleoside triphosphate hydrolases"/>
    <property type="match status" value="2"/>
</dbReference>
<dbReference type="PROSITE" id="PS51903">
    <property type="entry name" value="CLP_R"/>
    <property type="match status" value="1"/>
</dbReference>
<dbReference type="PROSITE" id="PS00870">
    <property type="entry name" value="CLPAB_1"/>
    <property type="match status" value="1"/>
</dbReference>
<dbReference type="PROSITE" id="PS00871">
    <property type="entry name" value="CLPAB_2"/>
    <property type="match status" value="1"/>
</dbReference>